<reference key="1">
    <citation type="journal article" date="2012" name="PLoS ONE">
        <title>Characterization of profilin polymorphism in pollen with a focus on multifunctionality.</title>
        <authorList>
            <person name="Jimenez-Lopez J.C."/>
            <person name="Morales S."/>
            <person name="Castro A.J."/>
            <person name="Volkmann D."/>
            <person name="Rodriguez-Garcia M.I."/>
            <person name="Alche Jde D."/>
        </authorList>
    </citation>
    <scope>NUCLEOTIDE SEQUENCE [MRNA]</scope>
    <scope>POLYMORPHISM</scope>
    <source>
        <strain>cv. Arbequina</strain>
        <tissue>Pollen</tissue>
    </source>
</reference>
<reference key="2">
    <citation type="journal article" date="2013" name="PLoS ONE">
        <title>Analysis of the effects of polymorphism on pollen profilin structural functionality and the generation of conformational, T- and B-cell epitopes.</title>
        <authorList>
            <person name="Jimenez-Lopez J.C."/>
            <person name="Rodriguez-Garcia M.I."/>
            <person name="Alche J.D."/>
        </authorList>
    </citation>
    <scope>3D-STRUCTURE MODELING</scope>
    <scope>DISULFIDE BOND</scope>
</reference>
<protein>
    <recommendedName>
        <fullName>Profilin-1</fullName>
    </recommendedName>
    <alternativeName>
        <fullName>Pollen allergen Ole e 2</fullName>
    </alternativeName>
    <allergenName>Ole e 2</allergenName>
</protein>
<dbReference type="EMBL" id="DQ138330">
    <property type="protein sequence ID" value="AAZ30408.1"/>
    <property type="molecule type" value="mRNA"/>
</dbReference>
<dbReference type="SMR" id="P0DKD4"/>
<dbReference type="GO" id="GO:0005938">
    <property type="term" value="C:cell cortex"/>
    <property type="evidence" value="ECO:0007669"/>
    <property type="project" value="TreeGrafter"/>
</dbReference>
<dbReference type="GO" id="GO:0005856">
    <property type="term" value="C:cytoskeleton"/>
    <property type="evidence" value="ECO:0007669"/>
    <property type="project" value="UniProtKB-SubCell"/>
</dbReference>
<dbReference type="GO" id="GO:0003785">
    <property type="term" value="F:actin monomer binding"/>
    <property type="evidence" value="ECO:0007669"/>
    <property type="project" value="TreeGrafter"/>
</dbReference>
<dbReference type="CDD" id="cd00148">
    <property type="entry name" value="PROF"/>
    <property type="match status" value="1"/>
</dbReference>
<dbReference type="FunFam" id="3.30.450.30:FF:000001">
    <property type="entry name" value="Profilin"/>
    <property type="match status" value="1"/>
</dbReference>
<dbReference type="Gene3D" id="3.30.450.30">
    <property type="entry name" value="Dynein light chain 2a, cytoplasmic"/>
    <property type="match status" value="1"/>
</dbReference>
<dbReference type="InterPro" id="IPR048278">
    <property type="entry name" value="PFN"/>
</dbReference>
<dbReference type="InterPro" id="IPR005455">
    <property type="entry name" value="PFN_euk"/>
</dbReference>
<dbReference type="InterPro" id="IPR036140">
    <property type="entry name" value="PFN_sf"/>
</dbReference>
<dbReference type="InterPro" id="IPR027310">
    <property type="entry name" value="Profilin_CS"/>
</dbReference>
<dbReference type="PANTHER" id="PTHR11604">
    <property type="entry name" value="PROFILIN"/>
    <property type="match status" value="1"/>
</dbReference>
<dbReference type="PANTHER" id="PTHR11604:SF25">
    <property type="entry name" value="PROFILIN-5"/>
    <property type="match status" value="1"/>
</dbReference>
<dbReference type="Pfam" id="PF00235">
    <property type="entry name" value="Profilin"/>
    <property type="match status" value="1"/>
</dbReference>
<dbReference type="PRINTS" id="PR00392">
    <property type="entry name" value="PROFILIN"/>
</dbReference>
<dbReference type="PRINTS" id="PR01640">
    <property type="entry name" value="PROFILINPLNT"/>
</dbReference>
<dbReference type="SMART" id="SM00392">
    <property type="entry name" value="PROF"/>
    <property type="match status" value="1"/>
</dbReference>
<dbReference type="SUPFAM" id="SSF55770">
    <property type="entry name" value="Profilin (actin-binding protein)"/>
    <property type="match status" value="1"/>
</dbReference>
<dbReference type="PROSITE" id="PS00414">
    <property type="entry name" value="PROFILIN"/>
    <property type="match status" value="1"/>
</dbReference>
<name>PROFJ_OLEEU</name>
<comment type="function">
    <text evidence="1">Binds to actin and affects the structure of the cytoskeleton. At high concentrations, profilin prevents the polymerization of actin, whereas it enhances it at low concentrations (By similarity).</text>
</comment>
<comment type="subunit">
    <text evidence="1">Occurs in many kinds of cells as a complex with monomeric actin in a 1:1 ratio.</text>
</comment>
<comment type="subcellular location">
    <subcellularLocation>
        <location evidence="1">Cytoplasm</location>
        <location evidence="1">Cytoskeleton</location>
    </subcellularLocation>
</comment>
<comment type="PTM">
    <text evidence="1">Phosphorylated by MAP kinases.</text>
</comment>
<comment type="polymorphism">
    <text>Several isoforms of the allergen exist due to polymorphism.</text>
</comment>
<comment type="allergen">
    <text>Causes an allergic reaction in human.</text>
</comment>
<comment type="miscellaneous">
    <text evidence="3">The variability of the residues taking part of IgE-binding epitopes might be responsible of the difference in cross-reactivity among olive pollen cultivars, and between distantly related pollen species, leading to a variable range of allergy reactions among atopic patients.</text>
</comment>
<comment type="similarity">
    <text evidence="2">Belongs to the profilin family.</text>
</comment>
<proteinExistence type="evidence at protein level"/>
<organism>
    <name type="scientific">Olea europaea</name>
    <name type="common">Common olive</name>
    <dbReference type="NCBI Taxonomy" id="4146"/>
    <lineage>
        <taxon>Eukaryota</taxon>
        <taxon>Viridiplantae</taxon>
        <taxon>Streptophyta</taxon>
        <taxon>Embryophyta</taxon>
        <taxon>Tracheophyta</taxon>
        <taxon>Spermatophyta</taxon>
        <taxon>Magnoliopsida</taxon>
        <taxon>eudicotyledons</taxon>
        <taxon>Gunneridae</taxon>
        <taxon>Pentapetalae</taxon>
        <taxon>asterids</taxon>
        <taxon>lamiids</taxon>
        <taxon>Lamiales</taxon>
        <taxon>Oleaceae</taxon>
        <taxon>Oleeae</taxon>
        <taxon>Olea</taxon>
    </lineage>
</organism>
<evidence type="ECO:0000250" key="1"/>
<evidence type="ECO:0000305" key="2"/>
<evidence type="ECO:0000305" key="3">
    <source>
    </source>
</evidence>
<accession>P0DKD4</accession>
<accession>A4GCR3</accession>
<feature type="initiator methionine" description="Removed" evidence="1">
    <location>
        <position position="1"/>
    </location>
</feature>
<feature type="chain" id="PRO_0000424975" description="Profilin-1">
    <location>
        <begin position="2"/>
        <end position="134"/>
    </location>
</feature>
<feature type="short sequence motif" description="Involved in PIP2 interaction">
    <location>
        <begin position="84"/>
        <end position="100"/>
    </location>
</feature>
<feature type="modified residue" description="Phosphothreonine" evidence="1">
    <location>
        <position position="114"/>
    </location>
</feature>
<feature type="disulfide bond" evidence="3">
    <location>
        <begin position="13"/>
        <end position="118"/>
    </location>
</feature>
<keyword id="KW-0009">Actin-binding</keyword>
<keyword id="KW-0020">Allergen</keyword>
<keyword id="KW-0963">Cytoplasm</keyword>
<keyword id="KW-0206">Cytoskeleton</keyword>
<keyword id="KW-1015">Disulfide bond</keyword>
<keyword id="KW-0597">Phosphoprotein</keyword>
<sequence>MSWQAYVDDHLMCDIEGHEGHRLTAAAIVGHDGSVWAQSATFPQFKPEEMNGIMTDFNEPGHLAPTGLHLGGTKYMVIQGEAGAVIRGKKGSGGITIKKTGQALVFGIYEEPVTPGQCNMVVERLGDYLLEQGL</sequence>